<keyword id="KW-0067">ATP-binding</keyword>
<keyword id="KW-0997">Cell inner membrane</keyword>
<keyword id="KW-1003">Cell membrane</keyword>
<keyword id="KW-0963">Cytoplasm</keyword>
<keyword id="KW-0472">Membrane</keyword>
<keyword id="KW-0479">Metal-binding</keyword>
<keyword id="KW-0547">Nucleotide-binding</keyword>
<keyword id="KW-0653">Protein transport</keyword>
<keyword id="KW-1278">Translocase</keyword>
<keyword id="KW-0811">Translocation</keyword>
<keyword id="KW-0813">Transport</keyword>
<keyword id="KW-0862">Zinc</keyword>
<dbReference type="EC" id="7.4.2.8" evidence="1"/>
<dbReference type="EMBL" id="AP008981">
    <property type="protein sequence ID" value="BAG40419.1"/>
    <property type="molecule type" value="Genomic_DNA"/>
</dbReference>
<dbReference type="RefSeq" id="WP_012461544.1">
    <property type="nucleotide sequence ID" value="NC_010793.1"/>
</dbReference>
<dbReference type="SMR" id="B3CSS2"/>
<dbReference type="KEGG" id="ott:OTT_0961"/>
<dbReference type="HOGENOM" id="CLU_005314_3_0_5"/>
<dbReference type="OrthoDB" id="9805579at2"/>
<dbReference type="Proteomes" id="UP000001033">
    <property type="component" value="Chromosome"/>
</dbReference>
<dbReference type="GO" id="GO:0031522">
    <property type="term" value="C:cell envelope Sec protein transport complex"/>
    <property type="evidence" value="ECO:0007669"/>
    <property type="project" value="TreeGrafter"/>
</dbReference>
<dbReference type="GO" id="GO:0005829">
    <property type="term" value="C:cytosol"/>
    <property type="evidence" value="ECO:0007669"/>
    <property type="project" value="TreeGrafter"/>
</dbReference>
<dbReference type="GO" id="GO:0005886">
    <property type="term" value="C:plasma membrane"/>
    <property type="evidence" value="ECO:0007669"/>
    <property type="project" value="UniProtKB-SubCell"/>
</dbReference>
<dbReference type="GO" id="GO:0005524">
    <property type="term" value="F:ATP binding"/>
    <property type="evidence" value="ECO:0007669"/>
    <property type="project" value="UniProtKB-UniRule"/>
</dbReference>
<dbReference type="GO" id="GO:0046872">
    <property type="term" value="F:metal ion binding"/>
    <property type="evidence" value="ECO:0007669"/>
    <property type="project" value="UniProtKB-KW"/>
</dbReference>
<dbReference type="GO" id="GO:0008564">
    <property type="term" value="F:protein-exporting ATPase activity"/>
    <property type="evidence" value="ECO:0007669"/>
    <property type="project" value="UniProtKB-EC"/>
</dbReference>
<dbReference type="GO" id="GO:0065002">
    <property type="term" value="P:intracellular protein transmembrane transport"/>
    <property type="evidence" value="ECO:0007669"/>
    <property type="project" value="UniProtKB-UniRule"/>
</dbReference>
<dbReference type="GO" id="GO:0017038">
    <property type="term" value="P:protein import"/>
    <property type="evidence" value="ECO:0007669"/>
    <property type="project" value="InterPro"/>
</dbReference>
<dbReference type="GO" id="GO:0006605">
    <property type="term" value="P:protein targeting"/>
    <property type="evidence" value="ECO:0007669"/>
    <property type="project" value="UniProtKB-UniRule"/>
</dbReference>
<dbReference type="GO" id="GO:0043952">
    <property type="term" value="P:protein transport by the Sec complex"/>
    <property type="evidence" value="ECO:0007669"/>
    <property type="project" value="TreeGrafter"/>
</dbReference>
<dbReference type="CDD" id="cd17928">
    <property type="entry name" value="DEXDc_SecA"/>
    <property type="match status" value="1"/>
</dbReference>
<dbReference type="CDD" id="cd18803">
    <property type="entry name" value="SF2_C_secA"/>
    <property type="match status" value="1"/>
</dbReference>
<dbReference type="FunFam" id="3.40.50.300:FF:000113">
    <property type="entry name" value="Preprotein translocase subunit SecA"/>
    <property type="match status" value="1"/>
</dbReference>
<dbReference type="FunFam" id="3.90.1440.10:FF:000001">
    <property type="entry name" value="Preprotein translocase subunit SecA"/>
    <property type="match status" value="1"/>
</dbReference>
<dbReference type="Gene3D" id="1.10.3060.10">
    <property type="entry name" value="Helical scaffold and wing domains of SecA"/>
    <property type="match status" value="1"/>
</dbReference>
<dbReference type="Gene3D" id="3.40.50.300">
    <property type="entry name" value="P-loop containing nucleotide triphosphate hydrolases"/>
    <property type="match status" value="2"/>
</dbReference>
<dbReference type="Gene3D" id="3.90.1440.10">
    <property type="entry name" value="SecA, preprotein cross-linking domain"/>
    <property type="match status" value="1"/>
</dbReference>
<dbReference type="HAMAP" id="MF_01382">
    <property type="entry name" value="SecA"/>
    <property type="match status" value="1"/>
</dbReference>
<dbReference type="InterPro" id="IPR014001">
    <property type="entry name" value="Helicase_ATP-bd"/>
</dbReference>
<dbReference type="InterPro" id="IPR001650">
    <property type="entry name" value="Helicase_C-like"/>
</dbReference>
<dbReference type="InterPro" id="IPR027417">
    <property type="entry name" value="P-loop_NTPase"/>
</dbReference>
<dbReference type="InterPro" id="IPR004027">
    <property type="entry name" value="SEC_C_motif"/>
</dbReference>
<dbReference type="InterPro" id="IPR000185">
    <property type="entry name" value="SecA"/>
</dbReference>
<dbReference type="InterPro" id="IPR020937">
    <property type="entry name" value="SecA_CS"/>
</dbReference>
<dbReference type="InterPro" id="IPR011115">
    <property type="entry name" value="SecA_DEAD"/>
</dbReference>
<dbReference type="InterPro" id="IPR014018">
    <property type="entry name" value="SecA_motor_DEAD"/>
</dbReference>
<dbReference type="InterPro" id="IPR011130">
    <property type="entry name" value="SecA_preprotein_X-link_dom"/>
</dbReference>
<dbReference type="InterPro" id="IPR044722">
    <property type="entry name" value="SecA_SF2_C"/>
</dbReference>
<dbReference type="InterPro" id="IPR011116">
    <property type="entry name" value="SecA_Wing/Scaffold"/>
</dbReference>
<dbReference type="InterPro" id="IPR036266">
    <property type="entry name" value="SecA_Wing/Scaffold_sf"/>
</dbReference>
<dbReference type="InterPro" id="IPR036670">
    <property type="entry name" value="SecA_X-link_sf"/>
</dbReference>
<dbReference type="NCBIfam" id="NF009538">
    <property type="entry name" value="PRK12904.1"/>
    <property type="match status" value="1"/>
</dbReference>
<dbReference type="NCBIfam" id="TIGR00963">
    <property type="entry name" value="secA"/>
    <property type="match status" value="1"/>
</dbReference>
<dbReference type="PANTHER" id="PTHR30612:SF0">
    <property type="entry name" value="CHLOROPLAST PROTEIN-TRANSPORTING ATPASE"/>
    <property type="match status" value="1"/>
</dbReference>
<dbReference type="PANTHER" id="PTHR30612">
    <property type="entry name" value="SECA INNER MEMBRANE COMPONENT OF SEC PROTEIN SECRETION SYSTEM"/>
    <property type="match status" value="1"/>
</dbReference>
<dbReference type="Pfam" id="PF21090">
    <property type="entry name" value="P-loop_SecA"/>
    <property type="match status" value="1"/>
</dbReference>
<dbReference type="Pfam" id="PF02810">
    <property type="entry name" value="SEC-C"/>
    <property type="match status" value="1"/>
</dbReference>
<dbReference type="Pfam" id="PF07517">
    <property type="entry name" value="SecA_DEAD"/>
    <property type="match status" value="1"/>
</dbReference>
<dbReference type="Pfam" id="PF01043">
    <property type="entry name" value="SecA_PP_bind"/>
    <property type="match status" value="1"/>
</dbReference>
<dbReference type="Pfam" id="PF07516">
    <property type="entry name" value="SecA_SW"/>
    <property type="match status" value="1"/>
</dbReference>
<dbReference type="PRINTS" id="PR00906">
    <property type="entry name" value="SECA"/>
</dbReference>
<dbReference type="SMART" id="SM00957">
    <property type="entry name" value="SecA_DEAD"/>
    <property type="match status" value="1"/>
</dbReference>
<dbReference type="SMART" id="SM00958">
    <property type="entry name" value="SecA_PP_bind"/>
    <property type="match status" value="1"/>
</dbReference>
<dbReference type="SUPFAM" id="SSF81886">
    <property type="entry name" value="Helical scaffold and wing domains of SecA"/>
    <property type="match status" value="1"/>
</dbReference>
<dbReference type="SUPFAM" id="SSF52540">
    <property type="entry name" value="P-loop containing nucleoside triphosphate hydrolases"/>
    <property type="match status" value="2"/>
</dbReference>
<dbReference type="SUPFAM" id="SSF81767">
    <property type="entry name" value="Pre-protein crosslinking domain of SecA"/>
    <property type="match status" value="1"/>
</dbReference>
<dbReference type="PROSITE" id="PS01312">
    <property type="entry name" value="SECA"/>
    <property type="match status" value="1"/>
</dbReference>
<dbReference type="PROSITE" id="PS51196">
    <property type="entry name" value="SECA_MOTOR_DEAD"/>
    <property type="match status" value="1"/>
</dbReference>
<comment type="function">
    <text evidence="1">Part of the Sec protein translocase complex. Interacts with the SecYEG preprotein conducting channel. Has a central role in coupling the hydrolysis of ATP to the transfer of proteins into and across the cell membrane, serving both as a receptor for the preprotein-SecB complex and as an ATP-driven molecular motor driving the stepwise translocation of polypeptide chains across the membrane.</text>
</comment>
<comment type="catalytic activity">
    <reaction evidence="1">
        <text>ATP + H2O + cellular proteinSide 1 = ADP + phosphate + cellular proteinSide 2.</text>
        <dbReference type="EC" id="7.4.2.8"/>
    </reaction>
</comment>
<comment type="cofactor">
    <cofactor evidence="1">
        <name>Zn(2+)</name>
        <dbReference type="ChEBI" id="CHEBI:29105"/>
    </cofactor>
    <text evidence="1">May bind 1 zinc ion per subunit.</text>
</comment>
<comment type="subunit">
    <text evidence="1">Monomer and homodimer. Part of the essential Sec protein translocation apparatus which comprises SecA, SecYEG and auxiliary proteins SecDF-YajC and YidC.</text>
</comment>
<comment type="subcellular location">
    <subcellularLocation>
        <location evidence="1">Cell inner membrane</location>
        <topology evidence="1">Peripheral membrane protein</topology>
        <orientation evidence="1">Cytoplasmic side</orientation>
    </subcellularLocation>
    <subcellularLocation>
        <location evidence="1">Cytoplasm</location>
    </subcellularLocation>
    <text evidence="1">Distribution is 50-50.</text>
</comment>
<comment type="similarity">
    <text evidence="1">Belongs to the SecA family.</text>
</comment>
<reference key="1">
    <citation type="journal article" date="2008" name="DNA Res.">
        <title>The whole-genome sequencing of the obligate intracellular bacterium Orientia tsutsugamushi revealed massive gene amplification during reductive genome evolution.</title>
        <authorList>
            <person name="Nakayama K."/>
            <person name="Yamashita A."/>
            <person name="Kurokawa K."/>
            <person name="Morimoto T."/>
            <person name="Ogawa M."/>
            <person name="Fukuhara M."/>
            <person name="Urakami H."/>
            <person name="Ohnishi M."/>
            <person name="Uchiyama I."/>
            <person name="Ogura Y."/>
            <person name="Ooka T."/>
            <person name="Oshima K."/>
            <person name="Tamura A."/>
            <person name="Hattori M."/>
            <person name="Hayashi T."/>
        </authorList>
    </citation>
    <scope>NUCLEOTIDE SEQUENCE [LARGE SCALE GENOMIC DNA]</scope>
    <source>
        <strain>Ikeda</strain>
    </source>
</reference>
<gene>
    <name evidence="1" type="primary">secA</name>
    <name type="ordered locus">OTT_0961</name>
</gene>
<feature type="chain" id="PRO_1000145038" description="Protein translocase subunit SecA">
    <location>
        <begin position="1"/>
        <end position="879"/>
    </location>
</feature>
<feature type="binding site" evidence="1">
    <location>
        <position position="86"/>
    </location>
    <ligand>
        <name>ATP</name>
        <dbReference type="ChEBI" id="CHEBI:30616"/>
    </ligand>
</feature>
<feature type="binding site" evidence="1">
    <location>
        <begin position="104"/>
        <end position="108"/>
    </location>
    <ligand>
        <name>ATP</name>
        <dbReference type="ChEBI" id="CHEBI:30616"/>
    </ligand>
</feature>
<feature type="binding site" evidence="1">
    <location>
        <position position="500"/>
    </location>
    <ligand>
        <name>ATP</name>
        <dbReference type="ChEBI" id="CHEBI:30616"/>
    </ligand>
</feature>
<feature type="binding site" evidence="1">
    <location>
        <position position="863"/>
    </location>
    <ligand>
        <name>Zn(2+)</name>
        <dbReference type="ChEBI" id="CHEBI:29105"/>
    </ligand>
</feature>
<feature type="binding site" evidence="1">
    <location>
        <position position="865"/>
    </location>
    <ligand>
        <name>Zn(2+)</name>
        <dbReference type="ChEBI" id="CHEBI:29105"/>
    </ligand>
</feature>
<feature type="binding site" evidence="1">
    <location>
        <position position="874"/>
    </location>
    <ligand>
        <name>Zn(2+)</name>
        <dbReference type="ChEBI" id="CHEBI:29105"/>
    </ligand>
</feature>
<feature type="binding site" evidence="1">
    <location>
        <position position="875"/>
    </location>
    <ligand>
        <name>Zn(2+)</name>
        <dbReference type="ChEBI" id="CHEBI:29105"/>
    </ligand>
</feature>
<accession>B3CSS2</accession>
<sequence>MLKFIKSIFKTPSDRIIANLKSKIQQVHSAESSLAKLSNIELRNKTNEFKARLANNEPIDNIQYEAFAVVREAAKRTIGIQHYDEQLIGGILLHQGKVIEMSTGEGKTLVATLPSYLNALIGKGVHVVTVNDYLAQRDSDWMGTIHRFLDITVGCITSNTNEHARKIAYNSDITYITNNELGFDFLRDNMQFTNQSKVQRGCNYAIIDEIDSILIDEARTPLIISGPVSDNTSLYPIINKLITKLNKDDYEMDEKLRNVTLTDSGINKLETMLAEINILAPNSNSLYDFENMHLIHYINQSLKAHTLFRRNVDYLVKNGKVIIIDEFTGRTMDSRRYSEGLHQALEAKEKVEIQNENQTLASITFQNYFRMYTKLSGMTGTAMTEATELKEIYDLDVVTVPTHNPVQRIDYNDEIYSTKKDKYSAIIQLIQECYSKGQPVLVGTVSIEKSEELSKLLHSKKIPHNVLNAKHHDKEASIIAQAGRIKAITIATNMAGRGTDIMLGGNAEMLVDQSNLTEEEYQEKLKITKMQIEQEKEQVINAGGLFVIGTERHESRRIDNQLRGRCGRQGDPGQTKFFLSLEDDLMRIFASDRVTKILRTIGLKDGEAIHHPLINRSLATAQQKIEAQNYEIRKNLLKYDNVMNDQRKVIYEQRNEAISSDNVNEILHNLTEELIVETVHKFIPPKSYKEDWNIHELLKEYHHIFNVKLQPASIEATSSSSEVIEYLTKTALDIYKQQEQDYSAKSANEAIKHIFIKTLDQTWKEHLYTLDHLKQGISLRAYGQKDPLNEYKREAFDLFKQMLLHLKYLFIQRVARLHIDLASSPKSTSSLLETSDNNLKGKIITENSMAHKYFGKISRNQLCPCNSGKKFKHCHGALK</sequence>
<evidence type="ECO:0000255" key="1">
    <source>
        <dbReference type="HAMAP-Rule" id="MF_01382"/>
    </source>
</evidence>
<organism>
    <name type="scientific">Orientia tsutsugamushi (strain Ikeda)</name>
    <name type="common">Rickettsia tsutsugamushi</name>
    <dbReference type="NCBI Taxonomy" id="334380"/>
    <lineage>
        <taxon>Bacteria</taxon>
        <taxon>Pseudomonadati</taxon>
        <taxon>Pseudomonadota</taxon>
        <taxon>Alphaproteobacteria</taxon>
        <taxon>Rickettsiales</taxon>
        <taxon>Rickettsiaceae</taxon>
        <taxon>Rickettsieae</taxon>
        <taxon>Orientia</taxon>
    </lineage>
</organism>
<proteinExistence type="inferred from homology"/>
<name>SECA_ORITI</name>
<protein>
    <recommendedName>
        <fullName evidence="1">Protein translocase subunit SecA</fullName>
        <ecNumber evidence="1">7.4.2.8</ecNumber>
    </recommendedName>
</protein>